<dbReference type="EMBL" id="CP000521">
    <property type="protein sequence ID" value="ABO13385.1"/>
    <property type="molecule type" value="Genomic_DNA"/>
</dbReference>
<dbReference type="KEGG" id="acb:A1S_2982"/>
<dbReference type="HOGENOM" id="CLU_144811_2_2_6"/>
<dbReference type="GO" id="GO:0005886">
    <property type="term" value="C:plasma membrane"/>
    <property type="evidence" value="ECO:0007669"/>
    <property type="project" value="UniProtKB-SubCell"/>
</dbReference>
<dbReference type="HAMAP" id="MF_00386">
    <property type="entry name" value="UPF0161_YidD"/>
    <property type="match status" value="1"/>
</dbReference>
<dbReference type="InterPro" id="IPR002696">
    <property type="entry name" value="Membr_insert_effic_factor_YidD"/>
</dbReference>
<dbReference type="NCBIfam" id="TIGR00278">
    <property type="entry name" value="membrane protein insertion efficiency factor YidD"/>
    <property type="match status" value="1"/>
</dbReference>
<dbReference type="PANTHER" id="PTHR33383">
    <property type="entry name" value="MEMBRANE PROTEIN INSERTION EFFICIENCY FACTOR-RELATED"/>
    <property type="match status" value="1"/>
</dbReference>
<dbReference type="PANTHER" id="PTHR33383:SF1">
    <property type="entry name" value="MEMBRANE PROTEIN INSERTION EFFICIENCY FACTOR-RELATED"/>
    <property type="match status" value="1"/>
</dbReference>
<dbReference type="Pfam" id="PF01809">
    <property type="entry name" value="YidD"/>
    <property type="match status" value="1"/>
</dbReference>
<dbReference type="SMART" id="SM01234">
    <property type="entry name" value="Haemolytic"/>
    <property type="match status" value="1"/>
</dbReference>
<feature type="chain" id="PRO_1000013059" description="Putative membrane protein insertion efficiency factor">
    <location>
        <begin position="1"/>
        <end position="106"/>
    </location>
</feature>
<comment type="function">
    <text evidence="1">Could be involved in insertion of integral membrane proteins into the membrane.</text>
</comment>
<comment type="subcellular location">
    <subcellularLocation>
        <location evidence="1">Cell inner membrane</location>
        <topology evidence="1">Peripheral membrane protein</topology>
        <orientation evidence="1">Cytoplasmic side</orientation>
    </subcellularLocation>
</comment>
<comment type="similarity">
    <text evidence="1">Belongs to the UPF0161 family.</text>
</comment>
<proteinExistence type="inferred from homology"/>
<sequence>MVRILRWFIRLYQIAISPLLGPRCRYIPTCSQYALEALQTHGAIKGVWLSSKRICRCHPWGGSGYDPVPPKAIRFISFHQIDSQTHHVAVPFRDRLMKQNLSNHLG</sequence>
<organism>
    <name type="scientific">Acinetobacter baumannii (strain ATCC 17978 / DSM 105126 / CIP 53.77 / LMG 1025 / NCDC KC755 / 5377)</name>
    <dbReference type="NCBI Taxonomy" id="400667"/>
    <lineage>
        <taxon>Bacteria</taxon>
        <taxon>Pseudomonadati</taxon>
        <taxon>Pseudomonadota</taxon>
        <taxon>Gammaproteobacteria</taxon>
        <taxon>Moraxellales</taxon>
        <taxon>Moraxellaceae</taxon>
        <taxon>Acinetobacter</taxon>
        <taxon>Acinetobacter calcoaceticus/baumannii complex</taxon>
    </lineage>
</organism>
<accession>A3M8Z1</accession>
<name>YIDD_ACIBT</name>
<keyword id="KW-0997">Cell inner membrane</keyword>
<keyword id="KW-1003">Cell membrane</keyword>
<keyword id="KW-0472">Membrane</keyword>
<evidence type="ECO:0000255" key="1">
    <source>
        <dbReference type="HAMAP-Rule" id="MF_00386"/>
    </source>
</evidence>
<gene>
    <name type="ordered locus">A1S_2982</name>
</gene>
<protein>
    <recommendedName>
        <fullName evidence="1">Putative membrane protein insertion efficiency factor</fullName>
    </recommendedName>
</protein>
<reference key="1">
    <citation type="journal article" date="2007" name="Genes Dev.">
        <title>New insights into Acinetobacter baumannii pathogenesis revealed by high-density pyrosequencing and transposon mutagenesis.</title>
        <authorList>
            <person name="Smith M.G."/>
            <person name="Gianoulis T.A."/>
            <person name="Pukatzki S."/>
            <person name="Mekalanos J.J."/>
            <person name="Ornston L.N."/>
            <person name="Gerstein M."/>
            <person name="Snyder M."/>
        </authorList>
    </citation>
    <scope>NUCLEOTIDE SEQUENCE [LARGE SCALE GENOMIC DNA]</scope>
    <source>
        <strain>ATCC 17978 / DSM 105126 / CIP 53.77 / LMG 1025 / NCDC KC755 / 5377</strain>
    </source>
</reference>